<comment type="function">
    <text evidence="1">Structure-specific nuclease with 5'-flap endonuclease and 5'-3' exonuclease activities involved in DNA replication and repair. During DNA replication, cleaves the 5'-overhanging flap structure that is generated by displacement synthesis when DNA polymerase encounters the 5'-end of a downstream Okazaki fragment. It enters the flap from the 5'-end and then tracks to cleave the flap base, leaving a nick for ligation. Also involved in the long patch base excision repair (LP-BER) pathway, by cleaving within the apurinic/apyrimidinic (AP) site-terminated flap. Acts as a genome stabilization factor that prevents flaps from equilibrating into structures that lead to duplications and deletions. Also possesses 5'-3' exonuclease activity on nicked or gapped double-stranded DNA, and exhibits RNase H activity. Also involved in replication and repair of rDNA and in repairing mitochondrial DNA (By similarity).</text>
</comment>
<comment type="cofactor">
    <cofactor evidence="1">
        <name>Mg(2+)</name>
        <dbReference type="ChEBI" id="CHEBI:18420"/>
    </cofactor>
    <text evidence="1">Binds 2 magnesium ions per subunit. They probably participate in the reaction catalyzed by the enzyme. May bind an additional third magnesium ion after substrate binding.</text>
</comment>
<comment type="subunit">
    <text evidence="1">Interacts with PCNA. Three molecules of fen1 bind to one PCNA trimer with each molecule binding to one PCNA monomer. PCNA stimulates the nuclease activity without altering cleavage specificity (By similarity).</text>
</comment>
<comment type="subcellular location">
    <subcellularLocation>
        <location evidence="1">Nucleus</location>
        <location evidence="1">Nucleolus</location>
    </subcellularLocation>
    <subcellularLocation>
        <location evidence="1">Nucleus</location>
        <location evidence="1">Nucleoplasm</location>
    </subcellularLocation>
    <subcellularLocation>
        <location evidence="1">Mitochondrion</location>
    </subcellularLocation>
    <text evidence="1">Resides mostly in the nucleoli and relocalizes to the nucleoplasm upon DNA damage.</text>
</comment>
<comment type="PTM">
    <text evidence="1">Phosphorylated. Phosphorylation upon DNA damage induces relocalization to the nuclear plasma (By similarity).</text>
</comment>
<comment type="similarity">
    <text evidence="2">Belongs to the XPG/RAD2 endonuclease family. FEN1 subfamily.</text>
</comment>
<comment type="sequence caution" evidence="2">
    <conflict type="erroneous initiation">
        <sequence resource="EMBL-CDS" id="AAH92837"/>
    </conflict>
    <text>Truncated N-terminus.</text>
</comment>
<organism>
    <name type="scientific">Danio rerio</name>
    <name type="common">Zebrafish</name>
    <name type="synonym">Brachydanio rerio</name>
    <dbReference type="NCBI Taxonomy" id="7955"/>
    <lineage>
        <taxon>Eukaryota</taxon>
        <taxon>Metazoa</taxon>
        <taxon>Chordata</taxon>
        <taxon>Craniata</taxon>
        <taxon>Vertebrata</taxon>
        <taxon>Euteleostomi</taxon>
        <taxon>Actinopterygii</taxon>
        <taxon>Neopterygii</taxon>
        <taxon>Teleostei</taxon>
        <taxon>Ostariophysi</taxon>
        <taxon>Cypriniformes</taxon>
        <taxon>Danionidae</taxon>
        <taxon>Danioninae</taxon>
        <taxon>Danio</taxon>
    </lineage>
</organism>
<feature type="chain" id="PRO_0000403489" description="Probable flap endonuclease 1 homolog">
    <location>
        <begin position="1"/>
        <end position="350"/>
    </location>
</feature>
<feature type="region of interest" description="N-domain">
    <location>
        <begin position="1"/>
        <end position="95"/>
    </location>
</feature>
<feature type="region of interest" description="I-domain">
    <location>
        <begin position="110"/>
        <end position="223"/>
    </location>
</feature>
<feature type="region of interest" description="Interaction with PCNA" evidence="1">
    <location>
        <begin position="317"/>
        <end position="325"/>
    </location>
</feature>
<feature type="binding site" evidence="1">
    <location>
        <position position="34"/>
    </location>
    <ligand>
        <name>Mg(2+)</name>
        <dbReference type="ChEBI" id="CHEBI:18420"/>
        <label>1</label>
    </ligand>
</feature>
<feature type="binding site" evidence="1">
    <location>
        <position position="61"/>
    </location>
    <ligand>
        <name>DNA</name>
        <dbReference type="ChEBI" id="CHEBI:16991"/>
    </ligand>
</feature>
<feature type="binding site" evidence="1">
    <location>
        <position position="77"/>
    </location>
    <ligand>
        <name>Mg(2+)</name>
        <dbReference type="ChEBI" id="CHEBI:18420"/>
        <label>1</label>
    </ligand>
</feature>
<feature type="binding site" evidence="1">
    <location>
        <position position="130"/>
    </location>
    <ligand>
        <name>DNA</name>
        <dbReference type="ChEBI" id="CHEBI:16991"/>
    </ligand>
</feature>
<feature type="binding site" evidence="1">
    <location>
        <position position="130"/>
    </location>
    <ligand>
        <name>Mg(2+)</name>
        <dbReference type="ChEBI" id="CHEBI:18420"/>
        <label>1</label>
    </ligand>
</feature>
<feature type="binding site" evidence="1">
    <location>
        <position position="132"/>
    </location>
    <ligand>
        <name>Mg(2+)</name>
        <dbReference type="ChEBI" id="CHEBI:18420"/>
        <label>1</label>
    </ligand>
</feature>
<feature type="binding site" evidence="1">
    <location>
        <position position="151"/>
    </location>
    <ligand>
        <name>Mg(2+)</name>
        <dbReference type="ChEBI" id="CHEBI:18420"/>
        <label>2</label>
    </ligand>
</feature>
<feature type="binding site" evidence="1">
    <location>
        <position position="153"/>
    </location>
    <ligand>
        <name>Mg(2+)</name>
        <dbReference type="ChEBI" id="CHEBI:18420"/>
        <label>2</label>
    </ligand>
</feature>
<feature type="binding site" evidence="1">
    <location>
        <position position="201"/>
    </location>
    <ligand>
        <name>DNA</name>
        <dbReference type="ChEBI" id="CHEBI:16991"/>
    </ligand>
</feature>
<feature type="binding site" evidence="1">
    <location>
        <position position="203"/>
    </location>
    <ligand>
        <name>DNA</name>
        <dbReference type="ChEBI" id="CHEBI:16991"/>
    </ligand>
</feature>
<feature type="binding site" evidence="1">
    <location>
        <position position="203"/>
    </location>
    <ligand>
        <name>Mg(2+)</name>
        <dbReference type="ChEBI" id="CHEBI:18420"/>
        <label>2</label>
    </ligand>
</feature>
<feature type="sequence conflict" description="In Ref. 2; AAH92837." evidence="2" ref="2">
    <original>H</original>
    <variation>N</variation>
    <location>
        <position position="82"/>
    </location>
</feature>
<feature type="sequence conflict" description="In Ref. 2; AAH92837." evidence="2" ref="2">
    <original>S</original>
    <variation>G</variation>
    <location>
        <position position="102"/>
    </location>
</feature>
<feature type="sequence conflict" description="In Ref. 2; AAH92837." evidence="2" ref="2">
    <original>K</original>
    <variation>E</variation>
    <location>
        <position position="247"/>
    </location>
</feature>
<feature type="sequence conflict" description="In Ref. 2; AAH92837." evidence="2" ref="2">
    <original>E</original>
    <variation>G</variation>
    <location>
        <position position="268"/>
    </location>
</feature>
<feature type="sequence conflict" description="In Ref. 2; AAH92837." evidence="2" ref="2">
    <original>M</original>
    <variation>T</variation>
    <location>
        <position position="299"/>
    </location>
</feature>
<feature type="sequence conflict" description="In Ref. 2; AAH92837." evidence="2" ref="2">
    <original>M</original>
    <variation>V</variation>
    <location>
        <position position="311"/>
    </location>
</feature>
<feature type="sequence conflict" description="In Ref. 2; AAH92837." evidence="2" ref="2">
    <original>R</original>
    <variation>K</variation>
    <location>
        <position position="332"/>
    </location>
</feature>
<feature type="sequence conflict" description="In Ref. 2; AAH92837." evidence="2" ref="2">
    <original>F</original>
    <variation>S</variation>
    <location>
        <position position="347"/>
    </location>
</feature>
<sequence>MGITKLAHLIHFDAPASMRSKEIGDYSGKIIALDTSIVVNQFRSALPGHLKLSPLAGLFYRTLAFLEHDIKPVFVLDGKPPHQKRAVLEKRAQSTGWSSSQSPNTGSAFNQECLRLLHLMGVPCIKAPGEAEALCAHLAKIGTVNAVASEDMDTLAFGGTVLLRQLNAKRDSEITEYSLPKLLEALQLKYEEFVDLCILLGCDYCDKIGGLGPSRALKLIKEHHTIEGVMEHVNRKTHPIPLNWQYKDARKLFFETPKIDDPVLAWSEPDEEGLVQFLCKEKPLKEERVRGRMKKFREMLLKRRKQREVNMQMGQTRQSRLEDFFPATRKRRAESAAVKESSGRKQFKIK</sequence>
<protein>
    <recommendedName>
        <fullName>Probable flap endonuclease 1 homolog</fullName>
        <shortName>FEN-1 homolog</shortName>
        <ecNumber>3.1.-.-</ecNumber>
    </recommendedName>
    <alternativeName>
        <fullName>Flap structure-specific endonuclease 1 homolog</fullName>
    </alternativeName>
</protein>
<keyword id="KW-0227">DNA damage</keyword>
<keyword id="KW-0234">DNA repair</keyword>
<keyword id="KW-0235">DNA replication</keyword>
<keyword id="KW-0255">Endonuclease</keyword>
<keyword id="KW-0269">Exonuclease</keyword>
<keyword id="KW-0378">Hydrolase</keyword>
<keyword id="KW-0460">Magnesium</keyword>
<keyword id="KW-0479">Metal-binding</keyword>
<keyword id="KW-0496">Mitochondrion</keyword>
<keyword id="KW-0540">Nuclease</keyword>
<keyword id="KW-0539">Nucleus</keyword>
<keyword id="KW-0597">Phosphoprotein</keyword>
<keyword id="KW-1185">Reference proteome</keyword>
<dbReference type="EC" id="3.1.-.-"/>
<dbReference type="EMBL" id="CR377211">
    <property type="protein sequence ID" value="CAQ13364.1"/>
    <property type="molecule type" value="Genomic_DNA"/>
</dbReference>
<dbReference type="EMBL" id="BC092837">
    <property type="protein sequence ID" value="AAH92837.1"/>
    <property type="status" value="ALT_INIT"/>
    <property type="molecule type" value="mRNA"/>
</dbReference>
<dbReference type="RefSeq" id="NP_001017611.2">
    <property type="nucleotide sequence ID" value="NM_001017611.2"/>
</dbReference>
<dbReference type="SMR" id="B0UXL7"/>
<dbReference type="STRING" id="7955.ENSDARP00000017784"/>
<dbReference type="PaxDb" id="7955-ENSDARP00000017784"/>
<dbReference type="Ensembl" id="ENSDART00000005381">
    <property type="protein sequence ID" value="ENSDARP00000017784"/>
    <property type="gene ID" value="ENSDARG00000012325"/>
</dbReference>
<dbReference type="GeneID" id="550274"/>
<dbReference type="KEGG" id="dre:550274"/>
<dbReference type="AGR" id="ZFIN:ZDB-GENE-050417-81"/>
<dbReference type="ZFIN" id="ZDB-GENE-050417-81">
    <property type="gene designation" value="zgc:110269"/>
</dbReference>
<dbReference type="eggNOG" id="KOG2519">
    <property type="taxonomic scope" value="Eukaryota"/>
</dbReference>
<dbReference type="HOGENOM" id="CLU_032444_0_1_1"/>
<dbReference type="InParanoid" id="B0UXL7"/>
<dbReference type="OMA" id="CRQTRME"/>
<dbReference type="OrthoDB" id="1937206at2759"/>
<dbReference type="PhylomeDB" id="B0UXL7"/>
<dbReference type="TreeFam" id="TF105701"/>
<dbReference type="PRO" id="PR:B0UXL7"/>
<dbReference type="Proteomes" id="UP000000437">
    <property type="component" value="Chromosome 2"/>
</dbReference>
<dbReference type="Bgee" id="ENSDARG00000012325">
    <property type="expression patterns" value="Expressed in presomitic mesoderm and 27 other cell types or tissues"/>
</dbReference>
<dbReference type="ExpressionAtlas" id="B0UXL7">
    <property type="expression patterns" value="baseline and differential"/>
</dbReference>
<dbReference type="GO" id="GO:0005739">
    <property type="term" value="C:mitochondrion"/>
    <property type="evidence" value="ECO:0007669"/>
    <property type="project" value="UniProtKB-SubCell"/>
</dbReference>
<dbReference type="GO" id="GO:0005730">
    <property type="term" value="C:nucleolus"/>
    <property type="evidence" value="ECO:0007669"/>
    <property type="project" value="UniProtKB-SubCell"/>
</dbReference>
<dbReference type="GO" id="GO:0005654">
    <property type="term" value="C:nucleoplasm"/>
    <property type="evidence" value="ECO:0007669"/>
    <property type="project" value="UniProtKB-SubCell"/>
</dbReference>
<dbReference type="GO" id="GO:0005634">
    <property type="term" value="C:nucleus"/>
    <property type="evidence" value="ECO:0000318"/>
    <property type="project" value="GO_Central"/>
</dbReference>
<dbReference type="GO" id="GO:0008409">
    <property type="term" value="F:5'-3' exonuclease activity"/>
    <property type="evidence" value="ECO:0000318"/>
    <property type="project" value="GO_Central"/>
</dbReference>
<dbReference type="GO" id="GO:0017108">
    <property type="term" value="F:5'-flap endonuclease activity"/>
    <property type="evidence" value="ECO:0000318"/>
    <property type="project" value="GO_Central"/>
</dbReference>
<dbReference type="GO" id="GO:0003677">
    <property type="term" value="F:DNA binding"/>
    <property type="evidence" value="ECO:0007669"/>
    <property type="project" value="InterPro"/>
</dbReference>
<dbReference type="GO" id="GO:0000287">
    <property type="term" value="F:magnesium ion binding"/>
    <property type="evidence" value="ECO:0000318"/>
    <property type="project" value="GO_Central"/>
</dbReference>
<dbReference type="GO" id="GO:0030145">
    <property type="term" value="F:manganese ion binding"/>
    <property type="evidence" value="ECO:0000318"/>
    <property type="project" value="GO_Central"/>
</dbReference>
<dbReference type="GO" id="GO:0004523">
    <property type="term" value="F:RNA-DNA hybrid ribonuclease activity"/>
    <property type="evidence" value="ECO:0000318"/>
    <property type="project" value="GO_Central"/>
</dbReference>
<dbReference type="GO" id="GO:0006281">
    <property type="term" value="P:DNA repair"/>
    <property type="evidence" value="ECO:0007669"/>
    <property type="project" value="UniProtKB-KW"/>
</dbReference>
<dbReference type="GO" id="GO:0006260">
    <property type="term" value="P:DNA replication"/>
    <property type="evidence" value="ECO:0007669"/>
    <property type="project" value="UniProtKB-KW"/>
</dbReference>
<dbReference type="CDD" id="cd09907">
    <property type="entry name" value="H3TH_FEN1-Euk"/>
    <property type="match status" value="1"/>
</dbReference>
<dbReference type="FunFam" id="1.10.150.20:FF:000009">
    <property type="entry name" value="Flap endonuclease 1"/>
    <property type="match status" value="1"/>
</dbReference>
<dbReference type="Gene3D" id="1.10.150.20">
    <property type="entry name" value="5' to 3' exonuclease, C-terminal subdomain"/>
    <property type="match status" value="1"/>
</dbReference>
<dbReference type="Gene3D" id="3.40.50.1010">
    <property type="entry name" value="5'-nuclease"/>
    <property type="match status" value="1"/>
</dbReference>
<dbReference type="InterPro" id="IPR036279">
    <property type="entry name" value="5-3_exonuclease_C_sf"/>
</dbReference>
<dbReference type="InterPro" id="IPR008918">
    <property type="entry name" value="HhH2"/>
</dbReference>
<dbReference type="InterPro" id="IPR029060">
    <property type="entry name" value="PIN-like_dom_sf"/>
</dbReference>
<dbReference type="InterPro" id="IPR006086">
    <property type="entry name" value="XPG-I_dom"/>
</dbReference>
<dbReference type="InterPro" id="IPR006084">
    <property type="entry name" value="XPG/Rad2"/>
</dbReference>
<dbReference type="InterPro" id="IPR006085">
    <property type="entry name" value="XPG_DNA_repair_N"/>
</dbReference>
<dbReference type="PANTHER" id="PTHR11081:SF49">
    <property type="entry name" value="FLAP ENDONUCLEASE 1 HOMOLOG-RELATED"/>
    <property type="match status" value="1"/>
</dbReference>
<dbReference type="PANTHER" id="PTHR11081">
    <property type="entry name" value="FLAP ENDONUCLEASE FAMILY MEMBER"/>
    <property type="match status" value="1"/>
</dbReference>
<dbReference type="Pfam" id="PF00867">
    <property type="entry name" value="XPG_I"/>
    <property type="match status" value="1"/>
</dbReference>
<dbReference type="Pfam" id="PF00752">
    <property type="entry name" value="XPG_N"/>
    <property type="match status" value="1"/>
</dbReference>
<dbReference type="PRINTS" id="PR00853">
    <property type="entry name" value="XPGRADSUPER"/>
</dbReference>
<dbReference type="SMART" id="SM00279">
    <property type="entry name" value="HhH2"/>
    <property type="match status" value="1"/>
</dbReference>
<dbReference type="SMART" id="SM00484">
    <property type="entry name" value="XPGI"/>
    <property type="match status" value="1"/>
</dbReference>
<dbReference type="SMART" id="SM00485">
    <property type="entry name" value="XPGN"/>
    <property type="match status" value="1"/>
</dbReference>
<dbReference type="SUPFAM" id="SSF47807">
    <property type="entry name" value="5' to 3' exonuclease, C-terminal subdomain"/>
    <property type="match status" value="1"/>
</dbReference>
<dbReference type="SUPFAM" id="SSF88723">
    <property type="entry name" value="PIN domain-like"/>
    <property type="match status" value="1"/>
</dbReference>
<evidence type="ECO:0000250" key="1"/>
<evidence type="ECO:0000305" key="2"/>
<accession>B0UXL7</accession>
<accession>Q568J1</accession>
<proteinExistence type="evidence at transcript level"/>
<reference key="1">
    <citation type="journal article" date="2013" name="Nature">
        <title>The zebrafish reference genome sequence and its relationship to the human genome.</title>
        <authorList>
            <person name="Howe K."/>
            <person name="Clark M.D."/>
            <person name="Torroja C.F."/>
            <person name="Torrance J."/>
            <person name="Berthelot C."/>
            <person name="Muffato M."/>
            <person name="Collins J.E."/>
            <person name="Humphray S."/>
            <person name="McLaren K."/>
            <person name="Matthews L."/>
            <person name="McLaren S."/>
            <person name="Sealy I."/>
            <person name="Caccamo M."/>
            <person name="Churcher C."/>
            <person name="Scott C."/>
            <person name="Barrett J.C."/>
            <person name="Koch R."/>
            <person name="Rauch G.J."/>
            <person name="White S."/>
            <person name="Chow W."/>
            <person name="Kilian B."/>
            <person name="Quintais L.T."/>
            <person name="Guerra-Assuncao J.A."/>
            <person name="Zhou Y."/>
            <person name="Gu Y."/>
            <person name="Yen J."/>
            <person name="Vogel J.H."/>
            <person name="Eyre T."/>
            <person name="Redmond S."/>
            <person name="Banerjee R."/>
            <person name="Chi J."/>
            <person name="Fu B."/>
            <person name="Langley E."/>
            <person name="Maguire S.F."/>
            <person name="Laird G.K."/>
            <person name="Lloyd D."/>
            <person name="Kenyon E."/>
            <person name="Donaldson S."/>
            <person name="Sehra H."/>
            <person name="Almeida-King J."/>
            <person name="Loveland J."/>
            <person name="Trevanion S."/>
            <person name="Jones M."/>
            <person name="Quail M."/>
            <person name="Willey D."/>
            <person name="Hunt A."/>
            <person name="Burton J."/>
            <person name="Sims S."/>
            <person name="McLay K."/>
            <person name="Plumb B."/>
            <person name="Davis J."/>
            <person name="Clee C."/>
            <person name="Oliver K."/>
            <person name="Clark R."/>
            <person name="Riddle C."/>
            <person name="Elliot D."/>
            <person name="Threadgold G."/>
            <person name="Harden G."/>
            <person name="Ware D."/>
            <person name="Begum S."/>
            <person name="Mortimore B."/>
            <person name="Kerry G."/>
            <person name="Heath P."/>
            <person name="Phillimore B."/>
            <person name="Tracey A."/>
            <person name="Corby N."/>
            <person name="Dunn M."/>
            <person name="Johnson C."/>
            <person name="Wood J."/>
            <person name="Clark S."/>
            <person name="Pelan S."/>
            <person name="Griffiths G."/>
            <person name="Smith M."/>
            <person name="Glithero R."/>
            <person name="Howden P."/>
            <person name="Barker N."/>
            <person name="Lloyd C."/>
            <person name="Stevens C."/>
            <person name="Harley J."/>
            <person name="Holt K."/>
            <person name="Panagiotidis G."/>
            <person name="Lovell J."/>
            <person name="Beasley H."/>
            <person name="Henderson C."/>
            <person name="Gordon D."/>
            <person name="Auger K."/>
            <person name="Wright D."/>
            <person name="Collins J."/>
            <person name="Raisen C."/>
            <person name="Dyer L."/>
            <person name="Leung K."/>
            <person name="Robertson L."/>
            <person name="Ambridge K."/>
            <person name="Leongamornlert D."/>
            <person name="McGuire S."/>
            <person name="Gilderthorp R."/>
            <person name="Griffiths C."/>
            <person name="Manthravadi D."/>
            <person name="Nichol S."/>
            <person name="Barker G."/>
            <person name="Whitehead S."/>
            <person name="Kay M."/>
            <person name="Brown J."/>
            <person name="Murnane C."/>
            <person name="Gray E."/>
            <person name="Humphries M."/>
            <person name="Sycamore N."/>
            <person name="Barker D."/>
            <person name="Saunders D."/>
            <person name="Wallis J."/>
            <person name="Babbage A."/>
            <person name="Hammond S."/>
            <person name="Mashreghi-Mohammadi M."/>
            <person name="Barr L."/>
            <person name="Martin S."/>
            <person name="Wray P."/>
            <person name="Ellington A."/>
            <person name="Matthews N."/>
            <person name="Ellwood M."/>
            <person name="Woodmansey R."/>
            <person name="Clark G."/>
            <person name="Cooper J."/>
            <person name="Tromans A."/>
            <person name="Grafham D."/>
            <person name="Skuce C."/>
            <person name="Pandian R."/>
            <person name="Andrews R."/>
            <person name="Harrison E."/>
            <person name="Kimberley A."/>
            <person name="Garnett J."/>
            <person name="Fosker N."/>
            <person name="Hall R."/>
            <person name="Garner P."/>
            <person name="Kelly D."/>
            <person name="Bird C."/>
            <person name="Palmer S."/>
            <person name="Gehring I."/>
            <person name="Berger A."/>
            <person name="Dooley C.M."/>
            <person name="Ersan-Urun Z."/>
            <person name="Eser C."/>
            <person name="Geiger H."/>
            <person name="Geisler M."/>
            <person name="Karotki L."/>
            <person name="Kirn A."/>
            <person name="Konantz J."/>
            <person name="Konantz M."/>
            <person name="Oberlander M."/>
            <person name="Rudolph-Geiger S."/>
            <person name="Teucke M."/>
            <person name="Lanz C."/>
            <person name="Raddatz G."/>
            <person name="Osoegawa K."/>
            <person name="Zhu B."/>
            <person name="Rapp A."/>
            <person name="Widaa S."/>
            <person name="Langford C."/>
            <person name="Yang F."/>
            <person name="Schuster S.C."/>
            <person name="Carter N.P."/>
            <person name="Harrow J."/>
            <person name="Ning Z."/>
            <person name="Herrero J."/>
            <person name="Searle S.M."/>
            <person name="Enright A."/>
            <person name="Geisler R."/>
            <person name="Plasterk R.H."/>
            <person name="Lee C."/>
            <person name="Westerfield M."/>
            <person name="de Jong P.J."/>
            <person name="Zon L.I."/>
            <person name="Postlethwait J.H."/>
            <person name="Nusslein-Volhard C."/>
            <person name="Hubbard T.J."/>
            <person name="Roest Crollius H."/>
            <person name="Rogers J."/>
            <person name="Stemple D.L."/>
        </authorList>
    </citation>
    <scope>NUCLEOTIDE SEQUENCE [LARGE SCALE GENOMIC DNA]</scope>
    <source>
        <strain>Tuebingen</strain>
    </source>
</reference>
<reference key="2">
    <citation type="submission" date="2005-04" db="EMBL/GenBank/DDBJ databases">
        <authorList>
            <consortium name="NIH - Zebrafish Gene Collection (ZGC) project"/>
        </authorList>
    </citation>
    <scope>NUCLEOTIDE SEQUENCE [LARGE SCALE MRNA]</scope>
    <source>
        <tissue>Ovary</tissue>
    </source>
</reference>
<name>FEN1B_DANRE</name>
<gene>
    <name type="ORF">si:dkeyp-13a3.3</name>
    <name type="ORF">zgc:110269</name>
</gene>